<feature type="chain" id="PRO_1000205566" description="Large ribosomal subunit protein bL12">
    <location>
        <begin position="1"/>
        <end position="121"/>
    </location>
</feature>
<comment type="function">
    <text evidence="1">Forms part of the ribosomal stalk which helps the ribosome interact with GTP-bound translation factors. Is thus essential for accurate translation.</text>
</comment>
<comment type="subunit">
    <text evidence="1">Homodimer. Part of the ribosomal stalk of the 50S ribosomal subunit. Forms a multimeric L10(L12)X complex, where L10 forms an elongated spine to which 2 to 4 L12 dimers bind in a sequential fashion. Binds GTP-bound translation factors.</text>
</comment>
<comment type="similarity">
    <text evidence="1">Belongs to the bacterial ribosomal protein bL12 family.</text>
</comment>
<evidence type="ECO:0000255" key="1">
    <source>
        <dbReference type="HAMAP-Rule" id="MF_00368"/>
    </source>
</evidence>
<evidence type="ECO:0000305" key="2"/>
<dbReference type="EMBL" id="AM181176">
    <property type="protein sequence ID" value="CAY52780.1"/>
    <property type="molecule type" value="Genomic_DNA"/>
</dbReference>
<dbReference type="RefSeq" id="WP_003210093.1">
    <property type="nucleotide sequence ID" value="NC_012660.1"/>
</dbReference>
<dbReference type="SMR" id="C3K2Y4"/>
<dbReference type="GeneID" id="97827742"/>
<dbReference type="eggNOG" id="COG0222">
    <property type="taxonomic scope" value="Bacteria"/>
</dbReference>
<dbReference type="HOGENOM" id="CLU_086499_3_2_6"/>
<dbReference type="OrthoDB" id="9811748at2"/>
<dbReference type="GO" id="GO:0022625">
    <property type="term" value="C:cytosolic large ribosomal subunit"/>
    <property type="evidence" value="ECO:0007669"/>
    <property type="project" value="TreeGrafter"/>
</dbReference>
<dbReference type="GO" id="GO:0003729">
    <property type="term" value="F:mRNA binding"/>
    <property type="evidence" value="ECO:0007669"/>
    <property type="project" value="TreeGrafter"/>
</dbReference>
<dbReference type="GO" id="GO:0003735">
    <property type="term" value="F:structural constituent of ribosome"/>
    <property type="evidence" value="ECO:0007669"/>
    <property type="project" value="InterPro"/>
</dbReference>
<dbReference type="GO" id="GO:0006412">
    <property type="term" value="P:translation"/>
    <property type="evidence" value="ECO:0007669"/>
    <property type="project" value="UniProtKB-UniRule"/>
</dbReference>
<dbReference type="CDD" id="cd00387">
    <property type="entry name" value="Ribosomal_L7_L12"/>
    <property type="match status" value="1"/>
</dbReference>
<dbReference type="FunFam" id="3.30.1390.10:FF:000001">
    <property type="entry name" value="50S ribosomal protein L7/L12"/>
    <property type="match status" value="1"/>
</dbReference>
<dbReference type="Gene3D" id="3.30.1390.10">
    <property type="match status" value="1"/>
</dbReference>
<dbReference type="Gene3D" id="1.20.5.710">
    <property type="entry name" value="Single helix bin"/>
    <property type="match status" value="1"/>
</dbReference>
<dbReference type="HAMAP" id="MF_00368">
    <property type="entry name" value="Ribosomal_bL12"/>
    <property type="match status" value="1"/>
</dbReference>
<dbReference type="InterPro" id="IPR000206">
    <property type="entry name" value="Ribosomal_bL12"/>
</dbReference>
<dbReference type="InterPro" id="IPR013823">
    <property type="entry name" value="Ribosomal_bL12_C"/>
</dbReference>
<dbReference type="InterPro" id="IPR014719">
    <property type="entry name" value="Ribosomal_bL12_C/ClpS-like"/>
</dbReference>
<dbReference type="InterPro" id="IPR008932">
    <property type="entry name" value="Ribosomal_bL12_oligo"/>
</dbReference>
<dbReference type="InterPro" id="IPR036235">
    <property type="entry name" value="Ribosomal_bL12_oligo_N_sf"/>
</dbReference>
<dbReference type="NCBIfam" id="TIGR00855">
    <property type="entry name" value="L12"/>
    <property type="match status" value="1"/>
</dbReference>
<dbReference type="PANTHER" id="PTHR45987">
    <property type="entry name" value="39S RIBOSOMAL PROTEIN L12"/>
    <property type="match status" value="1"/>
</dbReference>
<dbReference type="PANTHER" id="PTHR45987:SF4">
    <property type="entry name" value="LARGE RIBOSOMAL SUBUNIT PROTEIN BL12M"/>
    <property type="match status" value="1"/>
</dbReference>
<dbReference type="Pfam" id="PF00542">
    <property type="entry name" value="Ribosomal_L12"/>
    <property type="match status" value="1"/>
</dbReference>
<dbReference type="Pfam" id="PF16320">
    <property type="entry name" value="Ribosomal_L12_N"/>
    <property type="match status" value="1"/>
</dbReference>
<dbReference type="SUPFAM" id="SSF54736">
    <property type="entry name" value="ClpS-like"/>
    <property type="match status" value="1"/>
</dbReference>
<dbReference type="SUPFAM" id="SSF48300">
    <property type="entry name" value="Ribosomal protein L7/12, oligomerisation (N-terminal) domain"/>
    <property type="match status" value="1"/>
</dbReference>
<name>RL7_PSEFS</name>
<organism>
    <name type="scientific">Pseudomonas fluorescens (strain SBW25)</name>
    <dbReference type="NCBI Taxonomy" id="216595"/>
    <lineage>
        <taxon>Bacteria</taxon>
        <taxon>Pseudomonadati</taxon>
        <taxon>Pseudomonadota</taxon>
        <taxon>Gammaproteobacteria</taxon>
        <taxon>Pseudomonadales</taxon>
        <taxon>Pseudomonadaceae</taxon>
        <taxon>Pseudomonas</taxon>
    </lineage>
</organism>
<gene>
    <name evidence="1" type="primary">rplL</name>
    <name type="ordered locus">PFLU_5535</name>
</gene>
<keyword id="KW-0687">Ribonucleoprotein</keyword>
<keyword id="KW-0689">Ribosomal protein</keyword>
<sequence>MSISQDDILNAVAEMSVLQVVELIKAFEEKFGVSAAAASAGPAVAAVAAEEQTEFNVMLLEAGEKKVNVIKAVRELTGLGLKEAKAVVDGAPAQVLEAVSKDAADKAKAVLEEAGAKVELK</sequence>
<protein>
    <recommendedName>
        <fullName evidence="1">Large ribosomal subunit protein bL12</fullName>
    </recommendedName>
    <alternativeName>
        <fullName evidence="2">50S ribosomal protein L7/L12</fullName>
    </alternativeName>
</protein>
<accession>C3K2Y4</accession>
<reference key="1">
    <citation type="journal article" date="2009" name="Genome Biol.">
        <title>Genomic and genetic analyses of diversity and plant interactions of Pseudomonas fluorescens.</title>
        <authorList>
            <person name="Silby M.W."/>
            <person name="Cerdeno-Tarraga A.M."/>
            <person name="Vernikos G.S."/>
            <person name="Giddens S.R."/>
            <person name="Jackson R.W."/>
            <person name="Preston G.M."/>
            <person name="Zhang X.-X."/>
            <person name="Moon C.D."/>
            <person name="Gehrig S.M."/>
            <person name="Godfrey S.A.C."/>
            <person name="Knight C.G."/>
            <person name="Malone J.G."/>
            <person name="Robinson Z."/>
            <person name="Spiers A.J."/>
            <person name="Harris S."/>
            <person name="Challis G.L."/>
            <person name="Yaxley A.M."/>
            <person name="Harris D."/>
            <person name="Seeger K."/>
            <person name="Murphy L."/>
            <person name="Rutter S."/>
            <person name="Squares R."/>
            <person name="Quail M.A."/>
            <person name="Saunders E."/>
            <person name="Mavromatis K."/>
            <person name="Brettin T.S."/>
            <person name="Bentley S.D."/>
            <person name="Hothersall J."/>
            <person name="Stephens E."/>
            <person name="Thomas C.M."/>
            <person name="Parkhill J."/>
            <person name="Levy S.B."/>
            <person name="Rainey P.B."/>
            <person name="Thomson N.R."/>
        </authorList>
    </citation>
    <scope>NUCLEOTIDE SEQUENCE [LARGE SCALE GENOMIC DNA]</scope>
    <source>
        <strain>SBW25</strain>
    </source>
</reference>
<proteinExistence type="inferred from homology"/>